<gene>
    <name type="primary">pheA</name>
    <name type="ordered locus">NGO_1510</name>
</gene>
<feature type="chain" id="PRO_0000119189" description="Bifunctional chorismate mutase/prephenate dehydratase">
    <location>
        <begin position="1"/>
        <end position="362"/>
    </location>
</feature>
<feature type="domain" description="Chorismate mutase" evidence="3">
    <location>
        <begin position="3"/>
        <end position="91"/>
    </location>
</feature>
<feature type="domain" description="Prephenate dehydratase" evidence="4">
    <location>
        <begin position="92"/>
        <end position="269"/>
    </location>
</feature>
<feature type="domain" description="ACT" evidence="5">
    <location>
        <begin position="281"/>
        <end position="356"/>
    </location>
</feature>
<feature type="binding site" evidence="1">
    <location>
        <position position="13"/>
    </location>
    <ligand>
        <name>substrate</name>
    </ligand>
</feature>
<feature type="binding site" evidence="1">
    <location>
        <position position="30"/>
    </location>
    <ligand>
        <name>substrate</name>
    </ligand>
</feature>
<feature type="binding site" evidence="1">
    <location>
        <position position="41"/>
    </location>
    <ligand>
        <name>substrate</name>
    </ligand>
</feature>
<feature type="binding site" evidence="1">
    <location>
        <position position="52"/>
    </location>
    <ligand>
        <name>substrate</name>
    </ligand>
</feature>
<feature type="site" description="Essential for prephenate dehydratase activity" evidence="2">
    <location>
        <position position="262"/>
    </location>
</feature>
<comment type="function">
    <text evidence="1">Catalyzes the Claisen rearrangement of chorismate to prephenate and the decarboxylation/dehydration of prephenate to phenylpyruvate.</text>
</comment>
<comment type="catalytic activity">
    <reaction evidence="1">
        <text>chorismate = prephenate</text>
        <dbReference type="Rhea" id="RHEA:13897"/>
        <dbReference type="ChEBI" id="CHEBI:29748"/>
        <dbReference type="ChEBI" id="CHEBI:29934"/>
        <dbReference type="EC" id="5.4.99.5"/>
    </reaction>
</comment>
<comment type="catalytic activity">
    <reaction evidence="1">
        <text>prephenate + H(+) = 3-phenylpyruvate + CO2 + H2O</text>
        <dbReference type="Rhea" id="RHEA:21648"/>
        <dbReference type="ChEBI" id="CHEBI:15377"/>
        <dbReference type="ChEBI" id="CHEBI:15378"/>
        <dbReference type="ChEBI" id="CHEBI:16526"/>
        <dbReference type="ChEBI" id="CHEBI:18005"/>
        <dbReference type="ChEBI" id="CHEBI:29934"/>
        <dbReference type="EC" id="4.2.1.51"/>
    </reaction>
</comment>
<comment type="pathway">
    <text evidence="1">Amino-acid biosynthesis; L-phenylalanine biosynthesis; phenylpyruvate from prephenate: step 1/1.</text>
</comment>
<comment type="pathway">
    <text evidence="1">Metabolic intermediate biosynthesis; prephenate biosynthesis; prephenate from chorismate: step 1/1.</text>
</comment>
<comment type="subcellular location">
    <subcellularLocation>
        <location evidence="1">Cytoplasm</location>
    </subcellularLocation>
</comment>
<comment type="sequence caution" evidence="6">
    <conflict type="erroneous initiation">
        <sequence resource="EMBL-CDS" id="AAD05425"/>
    </conflict>
    <text>Extended N-terminus.</text>
</comment>
<organism>
    <name type="scientific">Neisseria gonorrhoeae (strain ATCC 700825 / FA 1090)</name>
    <dbReference type="NCBI Taxonomy" id="242231"/>
    <lineage>
        <taxon>Bacteria</taxon>
        <taxon>Pseudomonadati</taxon>
        <taxon>Pseudomonadota</taxon>
        <taxon>Betaproteobacteria</taxon>
        <taxon>Neisseriales</taxon>
        <taxon>Neisseriaceae</taxon>
        <taxon>Neisseria</taxon>
    </lineage>
</organism>
<dbReference type="EC" id="5.4.99.5" evidence="1"/>
<dbReference type="EC" id="4.2.1.51" evidence="1"/>
<dbReference type="EMBL" id="AF047375">
    <property type="protein sequence ID" value="AAD05425.1"/>
    <property type="status" value="ALT_INIT"/>
    <property type="molecule type" value="Genomic_DNA"/>
</dbReference>
<dbReference type="EMBL" id="AE004969">
    <property type="protein sequence ID" value="AAW90148.2"/>
    <property type="molecule type" value="Genomic_DNA"/>
</dbReference>
<dbReference type="RefSeq" id="WP_003689394.1">
    <property type="nucleotide sequence ID" value="NC_002946.2"/>
</dbReference>
<dbReference type="SMR" id="Q9ZHY3"/>
<dbReference type="STRING" id="242231.NGO_1510"/>
<dbReference type="GeneID" id="66753710"/>
<dbReference type="KEGG" id="ngo:NGO_1510"/>
<dbReference type="HOGENOM" id="CLU_035008_0_1_4"/>
<dbReference type="UniPathway" id="UPA00120">
    <property type="reaction ID" value="UER00203"/>
</dbReference>
<dbReference type="UniPathway" id="UPA00121">
    <property type="reaction ID" value="UER00345"/>
</dbReference>
<dbReference type="Proteomes" id="UP000000535">
    <property type="component" value="Chromosome"/>
</dbReference>
<dbReference type="GO" id="GO:0005737">
    <property type="term" value="C:cytoplasm"/>
    <property type="evidence" value="ECO:0007669"/>
    <property type="project" value="UniProtKB-SubCell"/>
</dbReference>
<dbReference type="GO" id="GO:0004106">
    <property type="term" value="F:chorismate mutase activity"/>
    <property type="evidence" value="ECO:0007669"/>
    <property type="project" value="UniProtKB-EC"/>
</dbReference>
<dbReference type="GO" id="GO:0004664">
    <property type="term" value="F:prephenate dehydratase activity"/>
    <property type="evidence" value="ECO:0007669"/>
    <property type="project" value="UniProtKB-EC"/>
</dbReference>
<dbReference type="GO" id="GO:0046417">
    <property type="term" value="P:chorismate metabolic process"/>
    <property type="evidence" value="ECO:0007669"/>
    <property type="project" value="InterPro"/>
</dbReference>
<dbReference type="GO" id="GO:0009094">
    <property type="term" value="P:L-phenylalanine biosynthetic process"/>
    <property type="evidence" value="ECO:0007669"/>
    <property type="project" value="UniProtKB-UniPathway"/>
</dbReference>
<dbReference type="CDD" id="cd04905">
    <property type="entry name" value="ACT_CM-PDT"/>
    <property type="match status" value="1"/>
</dbReference>
<dbReference type="CDD" id="cd13630">
    <property type="entry name" value="PBP2_PDT_1"/>
    <property type="match status" value="1"/>
</dbReference>
<dbReference type="FunFam" id="3.40.190.10:FF:000029">
    <property type="entry name" value="Chorismate mutase/Prephenate dehydratase"/>
    <property type="match status" value="1"/>
</dbReference>
<dbReference type="FunFam" id="3.40.190.10:FF:000034">
    <property type="entry name" value="Chorismate mutase/prephenate dehydratase"/>
    <property type="match status" value="1"/>
</dbReference>
<dbReference type="FunFam" id="1.20.59.10:FF:000004">
    <property type="entry name" value="Prephenate dehydratase"/>
    <property type="match status" value="1"/>
</dbReference>
<dbReference type="FunFam" id="3.30.70.260:FF:000012">
    <property type="entry name" value="Prephenate dehydratase"/>
    <property type="match status" value="1"/>
</dbReference>
<dbReference type="Gene3D" id="3.30.70.260">
    <property type="match status" value="1"/>
</dbReference>
<dbReference type="Gene3D" id="1.20.59.10">
    <property type="entry name" value="Chorismate mutase"/>
    <property type="match status" value="1"/>
</dbReference>
<dbReference type="Gene3D" id="3.40.190.10">
    <property type="entry name" value="Periplasmic binding protein-like II"/>
    <property type="match status" value="2"/>
</dbReference>
<dbReference type="InterPro" id="IPR045865">
    <property type="entry name" value="ACT-like_dom_sf"/>
</dbReference>
<dbReference type="InterPro" id="IPR002912">
    <property type="entry name" value="ACT_dom"/>
</dbReference>
<dbReference type="InterPro" id="IPR008242">
    <property type="entry name" value="Chor_mutase/pphenate_deHydtase"/>
</dbReference>
<dbReference type="InterPro" id="IPR036263">
    <property type="entry name" value="Chorismate_II_sf"/>
</dbReference>
<dbReference type="InterPro" id="IPR036979">
    <property type="entry name" value="CM_dom_sf"/>
</dbReference>
<dbReference type="InterPro" id="IPR002701">
    <property type="entry name" value="CM_II_prokaryot"/>
</dbReference>
<dbReference type="InterPro" id="IPR010957">
    <property type="entry name" value="G/b/e-P-prot_chorismate_mutase"/>
</dbReference>
<dbReference type="InterPro" id="IPR001086">
    <property type="entry name" value="Preph_deHydtase"/>
</dbReference>
<dbReference type="InterPro" id="IPR018528">
    <property type="entry name" value="Preph_deHydtase_CS"/>
</dbReference>
<dbReference type="NCBIfam" id="TIGR01807">
    <property type="entry name" value="CM_P2"/>
    <property type="match status" value="1"/>
</dbReference>
<dbReference type="NCBIfam" id="NF008865">
    <property type="entry name" value="PRK11898.1"/>
    <property type="match status" value="1"/>
</dbReference>
<dbReference type="PANTHER" id="PTHR21022">
    <property type="entry name" value="PREPHENATE DEHYDRATASE P PROTEIN"/>
    <property type="match status" value="1"/>
</dbReference>
<dbReference type="PANTHER" id="PTHR21022:SF19">
    <property type="entry name" value="PREPHENATE DEHYDRATASE-RELATED"/>
    <property type="match status" value="1"/>
</dbReference>
<dbReference type="Pfam" id="PF01842">
    <property type="entry name" value="ACT"/>
    <property type="match status" value="1"/>
</dbReference>
<dbReference type="Pfam" id="PF01817">
    <property type="entry name" value="CM_2"/>
    <property type="match status" value="1"/>
</dbReference>
<dbReference type="Pfam" id="PF00800">
    <property type="entry name" value="PDT"/>
    <property type="match status" value="1"/>
</dbReference>
<dbReference type="PIRSF" id="PIRSF001500">
    <property type="entry name" value="Chor_mut_pdt_Ppr"/>
    <property type="match status" value="1"/>
</dbReference>
<dbReference type="SMART" id="SM00830">
    <property type="entry name" value="CM_2"/>
    <property type="match status" value="1"/>
</dbReference>
<dbReference type="SUPFAM" id="SSF55021">
    <property type="entry name" value="ACT-like"/>
    <property type="match status" value="1"/>
</dbReference>
<dbReference type="SUPFAM" id="SSF48600">
    <property type="entry name" value="Chorismate mutase II"/>
    <property type="match status" value="1"/>
</dbReference>
<dbReference type="SUPFAM" id="SSF53850">
    <property type="entry name" value="Periplasmic binding protein-like II"/>
    <property type="match status" value="1"/>
</dbReference>
<dbReference type="PROSITE" id="PS51671">
    <property type="entry name" value="ACT"/>
    <property type="match status" value="1"/>
</dbReference>
<dbReference type="PROSITE" id="PS51168">
    <property type="entry name" value="CHORISMATE_MUT_2"/>
    <property type="match status" value="1"/>
</dbReference>
<dbReference type="PROSITE" id="PS00857">
    <property type="entry name" value="PREPHENATE_DEHYDR_1"/>
    <property type="match status" value="1"/>
</dbReference>
<dbReference type="PROSITE" id="PS00858">
    <property type="entry name" value="PREPHENATE_DEHYDR_2"/>
    <property type="match status" value="1"/>
</dbReference>
<dbReference type="PROSITE" id="PS51171">
    <property type="entry name" value="PREPHENATE_DEHYDR_3"/>
    <property type="match status" value="1"/>
</dbReference>
<accession>Q9ZHY3</accession>
<accession>Q5F6N9</accession>
<name>CMPDT_NEIG1</name>
<reference key="1">
    <citation type="journal article" date="1998" name="Mol. Microbiol.">
        <title>Differential roles of homologous recombination pathways in Neisseria gonorrhoeae pilin antigenic variation, DNA transformation and DNA repair.</title>
        <authorList>
            <person name="Mehr I.J."/>
            <person name="Seifert H.S."/>
        </authorList>
    </citation>
    <scope>NUCLEOTIDE SEQUENCE [GENOMIC DNA]</scope>
</reference>
<reference key="2">
    <citation type="submission" date="2003-03" db="EMBL/GenBank/DDBJ databases">
        <title>The complete genome sequence of Neisseria gonorrhoeae.</title>
        <authorList>
            <person name="Lewis L.A."/>
            <person name="Gillaspy A.F."/>
            <person name="McLaughlin R.E."/>
            <person name="Gipson M."/>
            <person name="Ducey T.F."/>
            <person name="Ownbey T."/>
            <person name="Hartman K."/>
            <person name="Nydick C."/>
            <person name="Carson M.B."/>
            <person name="Vaughn J."/>
            <person name="Thomson C."/>
            <person name="Song L."/>
            <person name="Lin S."/>
            <person name="Yuan X."/>
            <person name="Najar F."/>
            <person name="Zhan M."/>
            <person name="Ren Q."/>
            <person name="Zhu H."/>
            <person name="Qi S."/>
            <person name="Kenton S.M."/>
            <person name="Lai H."/>
            <person name="White J.D."/>
            <person name="Clifton S."/>
            <person name="Roe B.A."/>
            <person name="Dyer D.W."/>
        </authorList>
    </citation>
    <scope>NUCLEOTIDE SEQUENCE [LARGE SCALE GENOMIC DNA]</scope>
    <source>
        <strain>ATCC 700825 / FA 1090</strain>
    </source>
</reference>
<proteinExistence type="inferred from homology"/>
<protein>
    <recommendedName>
        <fullName evidence="1">Bifunctional chorismate mutase/prephenate dehydratase</fullName>
    </recommendedName>
    <alternativeName>
        <fullName evidence="1">Chorismate mutase-prephenate dehydratase</fullName>
    </alternativeName>
    <alternativeName>
        <fullName evidence="1">P-protein</fullName>
    </alternativeName>
    <domain>
        <recommendedName>
            <fullName evidence="1">Chorismate mutase</fullName>
            <shortName evidence="1">CM</shortName>
            <ecNumber evidence="1">5.4.99.5</ecNumber>
        </recommendedName>
    </domain>
    <domain>
        <recommendedName>
            <fullName evidence="1">Prephenate dehydratase</fullName>
            <shortName evidence="1">PDT</shortName>
            <ecNumber evidence="1">4.2.1.51</ecNumber>
        </recommendedName>
    </domain>
</protein>
<sequence>MSQTIDELLIPHRNAIDTIDAEILRLLNERAQHAHAIGELKGTGAVYRPEREVAVLRRIQDLNKGPLPDESVARLFREVMSECLAVERPLTIAYLGPQGTFTQQAAIKHFGHAAHTMACPTIDDCFKQVETRQADYLVAPVENSTEGSVGRTLDLLAVTALQACGEVVLRIHHNLLRKNNGSTEGIAKVFSHAQALAQCNDWLGRRLPNAERIAVSSNAEAARLVAESDDGTVAAIAGRTAAEIYGLDMVAECIEDEPNNTTRFLVMGHHETGASGSDKTSLAVSAPNRAGAVASLLQPLTESGISMTKFESRPSKSVLWEYLFFIDIEGHRRDAQIQTALERLGERASFVKAIGSYPTAVL</sequence>
<evidence type="ECO:0000250" key="1">
    <source>
        <dbReference type="UniProtKB" id="P0A9J8"/>
    </source>
</evidence>
<evidence type="ECO:0000255" key="2"/>
<evidence type="ECO:0000255" key="3">
    <source>
        <dbReference type="PROSITE-ProRule" id="PRU00515"/>
    </source>
</evidence>
<evidence type="ECO:0000255" key="4">
    <source>
        <dbReference type="PROSITE-ProRule" id="PRU00517"/>
    </source>
</evidence>
<evidence type="ECO:0000255" key="5">
    <source>
        <dbReference type="PROSITE-ProRule" id="PRU01007"/>
    </source>
</evidence>
<evidence type="ECO:0000305" key="6"/>
<keyword id="KW-0028">Amino-acid biosynthesis</keyword>
<keyword id="KW-0057">Aromatic amino acid biosynthesis</keyword>
<keyword id="KW-0963">Cytoplasm</keyword>
<keyword id="KW-0413">Isomerase</keyword>
<keyword id="KW-0456">Lyase</keyword>
<keyword id="KW-0511">Multifunctional enzyme</keyword>
<keyword id="KW-0584">Phenylalanine biosynthesis</keyword>
<keyword id="KW-1185">Reference proteome</keyword>